<name>RIR2H_MYCBO</name>
<sequence length="314" mass="35634">MTRTRSGSLAAGGLNWASLPLKLFAGGNAKFWDPADIDFTRDRADWEKLSDDERDYATRLCTQFIAGEEAVTEDIQPFMSAMRAEGRLADEMYLTQFAFEEAKHTQVFRMWLDAVGISEDLHRYLDDLPAYRQIFYAELPECLNALSADPSPAAQVRASVTYNHIVEGMLALTGYYAWHKICVERAILPGMQELVRRIGDDERRHMAWGTFTCRRHVAADDANWTVFETRMNELIPLALRLIEEGFALYGDQPPFDLSKDDFLQYSTDKGMRRFGTISNARGRPVAEIDVDYSPAQLEDTFADEDRRTLAAASA</sequence>
<reference key="1">
    <citation type="journal article" date="2003" name="Proc. Natl. Acad. Sci. U.S.A.">
        <title>The complete genome sequence of Mycobacterium bovis.</title>
        <authorList>
            <person name="Garnier T."/>
            <person name="Eiglmeier K."/>
            <person name="Camus J.-C."/>
            <person name="Medina N."/>
            <person name="Mansoor H."/>
            <person name="Pryor M."/>
            <person name="Duthoy S."/>
            <person name="Grondin S."/>
            <person name="Lacroix C."/>
            <person name="Monsempe C."/>
            <person name="Simon S."/>
            <person name="Harris B."/>
            <person name="Atkin R."/>
            <person name="Doggett J."/>
            <person name="Mayes R."/>
            <person name="Keating L."/>
            <person name="Wheeler P.R."/>
            <person name="Parkhill J."/>
            <person name="Barrell B.G."/>
            <person name="Cole S.T."/>
            <person name="Gordon S.V."/>
            <person name="Hewinson R.G."/>
        </authorList>
    </citation>
    <scope>NUCLEOTIDE SEQUENCE [LARGE SCALE GENOMIC DNA]</scope>
    <source>
        <strain>ATCC BAA-935 / AF2122/97</strain>
    </source>
</reference>
<reference key="2">
    <citation type="journal article" date="2017" name="Genome Announc.">
        <title>Updated reference genome sequence and annotation of Mycobacterium bovis AF2122/97.</title>
        <authorList>
            <person name="Malone K.M."/>
            <person name="Farrell D."/>
            <person name="Stuber T.P."/>
            <person name="Schubert O.T."/>
            <person name="Aebersold R."/>
            <person name="Robbe-Austerman S."/>
            <person name="Gordon S.V."/>
        </authorList>
    </citation>
    <scope>NUCLEOTIDE SEQUENCE [LARGE SCALE GENOMIC DNA]</scope>
    <scope>GENOME REANNOTATION</scope>
    <source>
        <strain>ATCC BAA-935 / AF2122/97</strain>
    </source>
</reference>
<accession>Q7U2I1</accession>
<accession>A0A1R3XVU1</accession>
<accession>X2BEH1</accession>
<evidence type="ECO:0000250" key="1">
    <source>
        <dbReference type="UniProtKB" id="P9WH69"/>
    </source>
</evidence>
<evidence type="ECO:0000305" key="2"/>
<protein>
    <recommendedName>
        <fullName evidence="1">R2-like ligand binding oxidase</fullName>
        <ecNumber evidence="1">1.-.-.-</ecNumber>
    </recommendedName>
    <alternativeName>
        <fullName>Ribonucleotide reductase R2 subunit homolog</fullName>
    </alternativeName>
    <alternativeName>
        <fullName>Ribonucleotide reductase small subunit homolog</fullName>
    </alternativeName>
</protein>
<comment type="function">
    <text evidence="1">Probable oxidase that might be involved in lipid metabolism.</text>
</comment>
<comment type="cofactor">
    <cofactor evidence="1">
        <name>Fe cation</name>
        <dbReference type="ChEBI" id="CHEBI:24875"/>
    </cofactor>
    <text evidence="1">Binds 1 Fe cation per subunit.</text>
</comment>
<comment type="cofactor">
    <cofactor evidence="1">
        <name>Mn(2+)</name>
        <dbReference type="ChEBI" id="CHEBI:29035"/>
    </cofactor>
    <text evidence="1">Binds 1 manganese ion per subunit. The iron and manganese ions form a dinuclear manganese-iron cluster.</text>
</comment>
<comment type="subunit">
    <text evidence="1">Homodimer.</text>
</comment>
<comment type="similarity">
    <text evidence="2">Belongs to the ribonucleoside diphosphate reductase small chain family. R2-like ligand binding oxidase subfamily.</text>
</comment>
<proteinExistence type="inferred from homology"/>
<feature type="chain" id="PRO_0000375424" description="R2-like ligand binding oxidase">
    <location>
        <begin position="1"/>
        <end position="314"/>
    </location>
</feature>
<feature type="binding site" evidence="1">
    <location>
        <position position="68"/>
    </location>
    <ligand>
        <name>Mn(2+)</name>
        <dbReference type="ChEBI" id="CHEBI:29035"/>
    </ligand>
</feature>
<feature type="binding site" evidence="1">
    <location>
        <position position="101"/>
    </location>
    <ligand>
        <name>Fe cation</name>
        <dbReference type="ChEBI" id="CHEBI:24875"/>
    </ligand>
</feature>
<feature type="binding site" evidence="1">
    <location>
        <position position="101"/>
    </location>
    <ligand>
        <name>Mn(2+)</name>
        <dbReference type="ChEBI" id="CHEBI:29035"/>
    </ligand>
</feature>
<feature type="binding site" evidence="1">
    <location>
        <position position="104"/>
    </location>
    <ligand>
        <name>Mn(2+)</name>
        <dbReference type="ChEBI" id="CHEBI:29035"/>
    </ligand>
</feature>
<feature type="binding site" evidence="1">
    <location>
        <position position="167"/>
    </location>
    <ligand>
        <name>Fe cation</name>
        <dbReference type="ChEBI" id="CHEBI:24875"/>
    </ligand>
</feature>
<feature type="binding site" evidence="1">
    <location>
        <position position="202"/>
    </location>
    <ligand>
        <name>Fe cation</name>
        <dbReference type="ChEBI" id="CHEBI:24875"/>
    </ligand>
</feature>
<feature type="binding site" evidence="1">
    <location>
        <position position="205"/>
    </location>
    <ligand>
        <name>Fe cation</name>
        <dbReference type="ChEBI" id="CHEBI:24875"/>
    </ligand>
</feature>
<feature type="cross-link" description="3-(O4'-tyrosyl)-valine (Val-Tyr)" evidence="1">
    <location>
        <begin position="71"/>
        <end position="162"/>
    </location>
</feature>
<keyword id="KW-0408">Iron</keyword>
<keyword id="KW-0464">Manganese</keyword>
<keyword id="KW-0479">Metal-binding</keyword>
<keyword id="KW-0560">Oxidoreductase</keyword>
<keyword id="KW-1185">Reference proteome</keyword>
<dbReference type="EC" id="1.-.-.-" evidence="1"/>
<dbReference type="EMBL" id="LT708304">
    <property type="protein sequence ID" value="SIT98733.1"/>
    <property type="molecule type" value="Genomic_DNA"/>
</dbReference>
<dbReference type="RefSeq" id="NP_853903.1">
    <property type="nucleotide sequence ID" value="NC_002945.3"/>
</dbReference>
<dbReference type="RefSeq" id="WP_003401270.1">
    <property type="nucleotide sequence ID" value="NC_002945.4"/>
</dbReference>
<dbReference type="SMR" id="Q7U2I1"/>
<dbReference type="PATRIC" id="fig|233413.5.peg.265"/>
<dbReference type="Proteomes" id="UP000001419">
    <property type="component" value="Chromosome"/>
</dbReference>
<dbReference type="GO" id="GO:0046872">
    <property type="term" value="F:metal ion binding"/>
    <property type="evidence" value="ECO:0007669"/>
    <property type="project" value="UniProtKB-KW"/>
</dbReference>
<dbReference type="GO" id="GO:0016491">
    <property type="term" value="F:oxidoreductase activity"/>
    <property type="evidence" value="ECO:0007669"/>
    <property type="project" value="UniProtKB-KW"/>
</dbReference>
<dbReference type="GO" id="GO:0009263">
    <property type="term" value="P:deoxyribonucleotide biosynthetic process"/>
    <property type="evidence" value="ECO:0007669"/>
    <property type="project" value="InterPro"/>
</dbReference>
<dbReference type="CDD" id="cd07911">
    <property type="entry name" value="RNRR2_Rv0233_like"/>
    <property type="match status" value="1"/>
</dbReference>
<dbReference type="FunFam" id="1.10.620.20:FF:000012">
    <property type="entry name" value="R2-like ligand binding oxidase"/>
    <property type="match status" value="1"/>
</dbReference>
<dbReference type="Gene3D" id="1.10.620.20">
    <property type="entry name" value="Ribonucleotide Reductase, subunit A"/>
    <property type="match status" value="1"/>
</dbReference>
<dbReference type="InterPro" id="IPR009078">
    <property type="entry name" value="Ferritin-like_SF"/>
</dbReference>
<dbReference type="InterPro" id="IPR033908">
    <property type="entry name" value="R2LOX"/>
</dbReference>
<dbReference type="InterPro" id="IPR012348">
    <property type="entry name" value="RNR-like"/>
</dbReference>
<dbReference type="InterPro" id="IPR000358">
    <property type="entry name" value="RNR_small_fam"/>
</dbReference>
<dbReference type="NCBIfam" id="NF006199">
    <property type="entry name" value="PRK08326.1-2"/>
    <property type="match status" value="1"/>
</dbReference>
<dbReference type="NCBIfam" id="NF006200">
    <property type="entry name" value="PRK08326.1-3"/>
    <property type="match status" value="1"/>
</dbReference>
<dbReference type="NCBIfam" id="NF006201">
    <property type="entry name" value="PRK08326.1-4"/>
    <property type="match status" value="1"/>
</dbReference>
<dbReference type="Pfam" id="PF00268">
    <property type="entry name" value="Ribonuc_red_sm"/>
    <property type="match status" value="1"/>
</dbReference>
<dbReference type="SUPFAM" id="SSF47240">
    <property type="entry name" value="Ferritin-like"/>
    <property type="match status" value="1"/>
</dbReference>
<gene>
    <name type="ordered locus">BQ2027_MB0238</name>
</gene>
<organism>
    <name type="scientific">Mycobacterium bovis (strain ATCC BAA-935 / AF2122/97)</name>
    <dbReference type="NCBI Taxonomy" id="233413"/>
    <lineage>
        <taxon>Bacteria</taxon>
        <taxon>Bacillati</taxon>
        <taxon>Actinomycetota</taxon>
        <taxon>Actinomycetes</taxon>
        <taxon>Mycobacteriales</taxon>
        <taxon>Mycobacteriaceae</taxon>
        <taxon>Mycobacterium</taxon>
        <taxon>Mycobacterium tuberculosis complex</taxon>
    </lineage>
</organism>